<accession>Q5MD89</accession>
<accession>Q5GIT2</accession>
<sequence>MKRDFTFFCRIWIGIPFFSGLVNGFSMSPPTLDNTKDQLVINANDTLNITCRGQRILDWSWPEESLSKVEFTDRQGQQSPTDTPGYREIRLKECQGVAGKPYCKILILTNAQANDSGYYRCFYKDIKAVIDGTTAASIFVFVRDPEHPFIKRGDNDMETIFITDSETHIEVPCLVSDPDLKVTLFSLVPYPEPVDGSVVTWNNKKGWSIPRHIIQNTSTFIGFYCSISVQNSQHTSSIYVVQVIGLKFYEFKLFPEDSPVELMQGESLVLNCTALVDFNTGVDFQWDYPGKKENRLASLQPLRNVLDEATEISSILSIRNIHLDDSGYYTCWANTLEMKRELTTVVIVHEKPFISLDYRNGSVIEAKEGQKSVRLSVKVSAYPSPEIQWYKNGKLISSKNSSRFKVQQHSLQIRDVCKQDAGEYMLVLKNSPAALEKRLNFTLIVNVPPQIHEKEAAPPTNLYGKGTRQILTCTADGSPPASISWQWRPWSPCDLERTRRALRRRGGRDQSPFCHNWMDLDPEHAVNPIESIDTLTQMVDGKEKTVGRVVIQNASVPAMYKCLAENRVGKDERLIYFYVTTIPEGFDIEMEPSEDPLEQDLVQLKCNADNFTYENLRWYRLDPQTVPPELDCKSLHQYATFLEGQLSFQTTSNNWVLQLNITNIQLQDEGNYVCEVQNRRTGVKHCHRKYIPVKAMEAPRYRHNPTNHTVNVSESLQMNCDVEGTPFPQLSWFKDNQPLHQISGILLQDSNRTLSIQRVREEDAGLYTCSACNQKGCVQSSATVSVIGSDDKTNVEIVILIGTGVIAIFFWVLLLVIFCNVKRVNPADIKTGYLSIIMDPGEVPLEEQCEYLPYDSSQWEISRDRLRLGKVLGHGAFGKVIEASIFGHDKKSSANTVAVKMLKEGATASEHKALMSELKILIHIGNHLNVVNLLGACTKPNGPLMVIVEYCKYGNLSNFLRAKREFFLPYRDRSPKTQSQVRRMIEAGQASQSEHQPSTSSTNPPRVTVDDLWKTPLTIEDLICYSFQVARGMEFLASRKCIHRDLAARNILLSENNVVKICDFGLARDIYKDPDYVRKGNARLPLKWMAPESIFDKVYTSQSDVWSFGVLLWEIFSLGASPYPGIQIDEDFCKRLKDGTRMRAPDNASPEIYGIMLACWQGEPRERPTFPALVEILGDLLQENSLPEIPFNVSQSSEDDGFSQASSRPPSQEEIRLACNTLPTRYYNCVPFAGCVMVGPSSTCHSRVKTFEELPMEMTSHKTQHDSQTDSGMVLASDELERFEHKHRGAMLTTATTGQSTDRLISCPSVSSSGSGGGLLRPVFFTQLSGQTFYNNEYGHLSEEGVSDYFSSSDQAV</sequence>
<proteinExistence type="evidence at transcript level"/>
<keyword id="KW-0037">Angiogenesis</keyword>
<keyword id="KW-0067">ATP-binding</keyword>
<keyword id="KW-1003">Cell membrane</keyword>
<keyword id="KW-0963">Cytoplasm</keyword>
<keyword id="KW-0217">Developmental protein</keyword>
<keyword id="KW-0221">Differentiation</keyword>
<keyword id="KW-1015">Disulfide bond</keyword>
<keyword id="KW-0325">Glycoprotein</keyword>
<keyword id="KW-0393">Immunoglobulin domain</keyword>
<keyword id="KW-0418">Kinase</keyword>
<keyword id="KW-0472">Membrane</keyword>
<keyword id="KW-0547">Nucleotide-binding</keyword>
<keyword id="KW-0539">Nucleus</keyword>
<keyword id="KW-0597">Phosphoprotein</keyword>
<keyword id="KW-0675">Receptor</keyword>
<keyword id="KW-1185">Reference proteome</keyword>
<keyword id="KW-0677">Repeat</keyword>
<keyword id="KW-0732">Signal</keyword>
<keyword id="KW-0808">Transferase</keyword>
<keyword id="KW-0812">Transmembrane</keyword>
<keyword id="KW-1133">Transmembrane helix</keyword>
<keyword id="KW-0829">Tyrosine-protein kinase</keyword>
<dbReference type="EC" id="2.7.10.1"/>
<dbReference type="EMBL" id="AY524001">
    <property type="protein sequence ID" value="AAS92272.1"/>
    <property type="molecule type" value="mRNA"/>
</dbReference>
<dbReference type="EMBL" id="AY833404">
    <property type="protein sequence ID" value="AAV93318.1"/>
    <property type="molecule type" value="mRNA"/>
</dbReference>
<dbReference type="SMR" id="Q5MD89"/>
<dbReference type="FunCoup" id="Q5MD89">
    <property type="interactions" value="1191"/>
</dbReference>
<dbReference type="STRING" id="7955.ENSDARP00000133227"/>
<dbReference type="GlyCosmos" id="Q5MD89">
    <property type="glycosylation" value="14 sites, No reported glycans"/>
</dbReference>
<dbReference type="PaxDb" id="7955-ENSDARP00000112456"/>
<dbReference type="AGR" id="ZFIN:ZDB-GENE-980526-326"/>
<dbReference type="ZFIN" id="ZDB-GENE-980526-326">
    <property type="gene designation" value="flt4"/>
</dbReference>
<dbReference type="eggNOG" id="KOG0200">
    <property type="taxonomic scope" value="Eukaryota"/>
</dbReference>
<dbReference type="InParanoid" id="Q5MD89"/>
<dbReference type="PhylomeDB" id="Q5MD89"/>
<dbReference type="Reactome" id="R-DRE-195399">
    <property type="pathway name" value="VEGF binds to VEGFR leading to receptor dimerization"/>
</dbReference>
<dbReference type="PRO" id="PR:Q5MD89"/>
<dbReference type="Proteomes" id="UP000000437">
    <property type="component" value="Unplaced"/>
</dbReference>
<dbReference type="GO" id="GO:0005737">
    <property type="term" value="C:cytoplasm"/>
    <property type="evidence" value="ECO:0007669"/>
    <property type="project" value="UniProtKB-SubCell"/>
</dbReference>
<dbReference type="GO" id="GO:0005634">
    <property type="term" value="C:nucleus"/>
    <property type="evidence" value="ECO:0007669"/>
    <property type="project" value="UniProtKB-SubCell"/>
</dbReference>
<dbReference type="GO" id="GO:0005886">
    <property type="term" value="C:plasma membrane"/>
    <property type="evidence" value="ECO:0000318"/>
    <property type="project" value="GO_Central"/>
</dbReference>
<dbReference type="GO" id="GO:0043235">
    <property type="term" value="C:receptor complex"/>
    <property type="evidence" value="ECO:0000318"/>
    <property type="project" value="GO_Central"/>
</dbReference>
<dbReference type="GO" id="GO:0005524">
    <property type="term" value="F:ATP binding"/>
    <property type="evidence" value="ECO:0007669"/>
    <property type="project" value="UniProtKB-KW"/>
</dbReference>
<dbReference type="GO" id="GO:0019838">
    <property type="term" value="F:growth factor binding"/>
    <property type="evidence" value="ECO:0000318"/>
    <property type="project" value="GO_Central"/>
</dbReference>
<dbReference type="GO" id="GO:0042802">
    <property type="term" value="F:identical protein binding"/>
    <property type="evidence" value="ECO:0000353"/>
    <property type="project" value="ZFIN"/>
</dbReference>
<dbReference type="GO" id="GO:0005021">
    <property type="term" value="F:vascular endothelial growth factor receptor activity"/>
    <property type="evidence" value="ECO:0000250"/>
    <property type="project" value="UniProtKB"/>
</dbReference>
<dbReference type="GO" id="GO:0001525">
    <property type="term" value="P:angiogenesis"/>
    <property type="evidence" value="ECO:0000315"/>
    <property type="project" value="ZFIN"/>
</dbReference>
<dbReference type="GO" id="GO:0036302">
    <property type="term" value="P:atrioventricular canal development"/>
    <property type="evidence" value="ECO:0000315"/>
    <property type="project" value="ZFIN"/>
</dbReference>
<dbReference type="GO" id="GO:0061026">
    <property type="term" value="P:cardiac muscle tissue regeneration"/>
    <property type="evidence" value="ECO:0000315"/>
    <property type="project" value="ZFIN"/>
</dbReference>
<dbReference type="GO" id="GO:0016477">
    <property type="term" value="P:cell migration"/>
    <property type="evidence" value="ECO:0000318"/>
    <property type="project" value="GO_Central"/>
</dbReference>
<dbReference type="GO" id="GO:0001945">
    <property type="term" value="P:lymph vessel development"/>
    <property type="evidence" value="ECO:0000315"/>
    <property type="project" value="ZFIN"/>
</dbReference>
<dbReference type="GO" id="GO:0036303">
    <property type="term" value="P:lymph vessel morphogenesis"/>
    <property type="evidence" value="ECO:0000315"/>
    <property type="project" value="ZFIN"/>
</dbReference>
<dbReference type="GO" id="GO:0001946">
    <property type="term" value="P:lymphangiogenesis"/>
    <property type="evidence" value="ECO:0000315"/>
    <property type="project" value="ZFIN"/>
</dbReference>
<dbReference type="GO" id="GO:0060836">
    <property type="term" value="P:lymphatic endothelial cell differentiation"/>
    <property type="evidence" value="ECO:0000315"/>
    <property type="project" value="ZFIN"/>
</dbReference>
<dbReference type="GO" id="GO:0008045">
    <property type="term" value="P:motor neuron axon guidance"/>
    <property type="evidence" value="ECO:0000315"/>
    <property type="project" value="ZFIN"/>
</dbReference>
<dbReference type="GO" id="GO:0030335">
    <property type="term" value="P:positive regulation of cell migration"/>
    <property type="evidence" value="ECO:0000318"/>
    <property type="project" value="GO_Central"/>
</dbReference>
<dbReference type="GO" id="GO:0008284">
    <property type="term" value="P:positive regulation of cell population proliferation"/>
    <property type="evidence" value="ECO:0000318"/>
    <property type="project" value="GO_Central"/>
</dbReference>
<dbReference type="GO" id="GO:0043410">
    <property type="term" value="P:positive regulation of MAPK cascade"/>
    <property type="evidence" value="ECO:0000318"/>
    <property type="project" value="GO_Central"/>
</dbReference>
<dbReference type="GO" id="GO:0046777">
    <property type="term" value="P:protein autophosphorylation"/>
    <property type="evidence" value="ECO:0000250"/>
    <property type="project" value="UniProtKB"/>
</dbReference>
<dbReference type="GO" id="GO:0030947">
    <property type="term" value="P:regulation of vascular endothelial growth factor receptor signaling pathway"/>
    <property type="evidence" value="ECO:0000316"/>
    <property type="project" value="ZFIN"/>
</dbReference>
<dbReference type="GO" id="GO:1900746">
    <property type="term" value="P:regulation of vascular endothelial growth factor signaling pathway"/>
    <property type="evidence" value="ECO:0000316"/>
    <property type="project" value="ZFIN"/>
</dbReference>
<dbReference type="GO" id="GO:0035474">
    <property type="term" value="P:selective angioblast sprouting"/>
    <property type="evidence" value="ECO:0000315"/>
    <property type="project" value="ZFIN"/>
</dbReference>
<dbReference type="GO" id="GO:0002040">
    <property type="term" value="P:sprouting angiogenesis"/>
    <property type="evidence" value="ECO:0000316"/>
    <property type="project" value="ZFIN"/>
</dbReference>
<dbReference type="GO" id="GO:0048010">
    <property type="term" value="P:vascular endothelial growth factor receptor signaling pathway"/>
    <property type="evidence" value="ECO:0000316"/>
    <property type="project" value="ZFIN"/>
</dbReference>
<dbReference type="GO" id="GO:0038084">
    <property type="term" value="P:vascular endothelial growth factor signaling pathway"/>
    <property type="evidence" value="ECO:0000250"/>
    <property type="project" value="UniProtKB"/>
</dbReference>
<dbReference type="GO" id="GO:0001944">
    <property type="term" value="P:vasculature development"/>
    <property type="evidence" value="ECO:0000315"/>
    <property type="project" value="ZFIN"/>
</dbReference>
<dbReference type="GO" id="GO:0060841">
    <property type="term" value="P:venous blood vessel development"/>
    <property type="evidence" value="ECO:0000315"/>
    <property type="project" value="ZFIN"/>
</dbReference>
<dbReference type="GO" id="GO:0060855">
    <property type="term" value="P:venous endothelial cell migration involved in lymph vessel development"/>
    <property type="evidence" value="ECO:0000315"/>
    <property type="project" value="ZFIN"/>
</dbReference>
<dbReference type="CDD" id="cd00096">
    <property type="entry name" value="Ig"/>
    <property type="match status" value="1"/>
</dbReference>
<dbReference type="CDD" id="cd05862">
    <property type="entry name" value="IgI_VEGFR"/>
    <property type="match status" value="1"/>
</dbReference>
<dbReference type="FunFam" id="1.10.510.10:FF:000077">
    <property type="entry name" value="Vascular endothelial growth factor receptor 2"/>
    <property type="match status" value="1"/>
</dbReference>
<dbReference type="FunFam" id="2.60.40.10:FF:000532">
    <property type="entry name" value="Vascular endothelial growth factor receptor 2"/>
    <property type="match status" value="1"/>
</dbReference>
<dbReference type="FunFam" id="3.30.200.20:FF:000041">
    <property type="entry name" value="Vascular endothelial growth factor receptor 2"/>
    <property type="match status" value="1"/>
</dbReference>
<dbReference type="FunFam" id="2.60.40.10:FF:000143">
    <property type="entry name" value="Vascular endothelial growth factor receptor 3"/>
    <property type="match status" value="1"/>
</dbReference>
<dbReference type="FunFam" id="2.60.40.10:FF:000247">
    <property type="entry name" value="Vascular endothelial growth factor receptor 3"/>
    <property type="match status" value="1"/>
</dbReference>
<dbReference type="FunFam" id="2.60.40.10:FF:000411">
    <property type="entry name" value="Vascular endothelial growth factor receptor 3"/>
    <property type="match status" value="1"/>
</dbReference>
<dbReference type="FunFam" id="2.60.40.10:FF:000479">
    <property type="entry name" value="Vascular endothelial growth factor receptor 3"/>
    <property type="match status" value="1"/>
</dbReference>
<dbReference type="FunFam" id="2.60.40.10:FF:000949">
    <property type="entry name" value="vascular endothelial growth factor receptor 3"/>
    <property type="match status" value="1"/>
</dbReference>
<dbReference type="Gene3D" id="2.60.40.10">
    <property type="entry name" value="Immunoglobulins"/>
    <property type="match status" value="7"/>
</dbReference>
<dbReference type="Gene3D" id="3.30.200.20">
    <property type="entry name" value="Phosphorylase Kinase, domain 1"/>
    <property type="match status" value="1"/>
</dbReference>
<dbReference type="Gene3D" id="1.10.510.10">
    <property type="entry name" value="Transferase(Phosphotransferase) domain 1"/>
    <property type="match status" value="1"/>
</dbReference>
<dbReference type="InterPro" id="IPR007110">
    <property type="entry name" value="Ig-like_dom"/>
</dbReference>
<dbReference type="InterPro" id="IPR036179">
    <property type="entry name" value="Ig-like_dom_sf"/>
</dbReference>
<dbReference type="InterPro" id="IPR013783">
    <property type="entry name" value="Ig-like_fold"/>
</dbReference>
<dbReference type="InterPro" id="IPR013098">
    <property type="entry name" value="Ig_I-set"/>
</dbReference>
<dbReference type="InterPro" id="IPR003599">
    <property type="entry name" value="Ig_sub"/>
</dbReference>
<dbReference type="InterPro" id="IPR003598">
    <property type="entry name" value="Ig_sub2"/>
</dbReference>
<dbReference type="InterPro" id="IPR013151">
    <property type="entry name" value="Immunoglobulin_dom"/>
</dbReference>
<dbReference type="InterPro" id="IPR011009">
    <property type="entry name" value="Kinase-like_dom_sf"/>
</dbReference>
<dbReference type="InterPro" id="IPR000719">
    <property type="entry name" value="Prot_kinase_dom"/>
</dbReference>
<dbReference type="InterPro" id="IPR017441">
    <property type="entry name" value="Protein_kinase_ATP_BS"/>
</dbReference>
<dbReference type="InterPro" id="IPR050122">
    <property type="entry name" value="RTK"/>
</dbReference>
<dbReference type="InterPro" id="IPR001245">
    <property type="entry name" value="Ser-Thr/Tyr_kinase_cat_dom"/>
</dbReference>
<dbReference type="InterPro" id="IPR008266">
    <property type="entry name" value="Tyr_kinase_AS"/>
</dbReference>
<dbReference type="InterPro" id="IPR020635">
    <property type="entry name" value="Tyr_kinase_cat_dom"/>
</dbReference>
<dbReference type="InterPro" id="IPR001824">
    <property type="entry name" value="Tyr_kinase_rcpt_3_CS"/>
</dbReference>
<dbReference type="InterPro" id="IPR041348">
    <property type="entry name" value="VEGFR-2_TMD"/>
</dbReference>
<dbReference type="InterPro" id="IPR055229">
    <property type="entry name" value="VEGFR1-3_5th"/>
</dbReference>
<dbReference type="InterPro" id="IPR055238">
    <property type="entry name" value="VEGFR1-3_N_Ig-like"/>
</dbReference>
<dbReference type="PANTHER" id="PTHR24416">
    <property type="entry name" value="TYROSINE-PROTEIN KINASE RECEPTOR"/>
    <property type="match status" value="1"/>
</dbReference>
<dbReference type="PANTHER" id="PTHR24416:SF49">
    <property type="entry name" value="VASCULAR ENDOTHELIAL GROWTH FACTOR RECEPTOR 3"/>
    <property type="match status" value="1"/>
</dbReference>
<dbReference type="Pfam" id="PF07679">
    <property type="entry name" value="I-set"/>
    <property type="match status" value="2"/>
</dbReference>
<dbReference type="Pfam" id="PF00047">
    <property type="entry name" value="ig"/>
    <property type="match status" value="1"/>
</dbReference>
<dbReference type="Pfam" id="PF22971">
    <property type="entry name" value="Ig_VEGFR-1-like_5th"/>
    <property type="match status" value="1"/>
</dbReference>
<dbReference type="Pfam" id="PF07714">
    <property type="entry name" value="PK_Tyr_Ser-Thr"/>
    <property type="match status" value="1"/>
</dbReference>
<dbReference type="Pfam" id="PF21339">
    <property type="entry name" value="VEGFR-1-like_Ig-like"/>
    <property type="match status" value="1"/>
</dbReference>
<dbReference type="Pfam" id="PF17988">
    <property type="entry name" value="VEGFR-2_TMD"/>
    <property type="match status" value="1"/>
</dbReference>
<dbReference type="Pfam" id="PF22854">
    <property type="entry name" value="VEGFR1-3_N_Ig-like"/>
    <property type="match status" value="1"/>
</dbReference>
<dbReference type="PIRSF" id="PIRSF000615">
    <property type="entry name" value="TyrPK_CSF1-R"/>
    <property type="match status" value="1"/>
</dbReference>
<dbReference type="PRINTS" id="PR01832">
    <property type="entry name" value="VEGFRECEPTOR"/>
</dbReference>
<dbReference type="PRINTS" id="PR01835">
    <property type="entry name" value="VEGFRECEPTR3"/>
</dbReference>
<dbReference type="SMART" id="SM00409">
    <property type="entry name" value="IG"/>
    <property type="match status" value="6"/>
</dbReference>
<dbReference type="SMART" id="SM00408">
    <property type="entry name" value="IGc2"/>
    <property type="match status" value="6"/>
</dbReference>
<dbReference type="SMART" id="SM00219">
    <property type="entry name" value="TyrKc"/>
    <property type="match status" value="1"/>
</dbReference>
<dbReference type="SUPFAM" id="SSF48726">
    <property type="entry name" value="Immunoglobulin"/>
    <property type="match status" value="6"/>
</dbReference>
<dbReference type="SUPFAM" id="SSF56112">
    <property type="entry name" value="Protein kinase-like (PK-like)"/>
    <property type="match status" value="1"/>
</dbReference>
<dbReference type="PROSITE" id="PS50835">
    <property type="entry name" value="IG_LIKE"/>
    <property type="match status" value="5"/>
</dbReference>
<dbReference type="PROSITE" id="PS00107">
    <property type="entry name" value="PROTEIN_KINASE_ATP"/>
    <property type="match status" value="1"/>
</dbReference>
<dbReference type="PROSITE" id="PS50011">
    <property type="entry name" value="PROTEIN_KINASE_DOM"/>
    <property type="match status" value="1"/>
</dbReference>
<dbReference type="PROSITE" id="PS00109">
    <property type="entry name" value="PROTEIN_KINASE_TYR"/>
    <property type="match status" value="1"/>
</dbReference>
<dbReference type="PROSITE" id="PS00240">
    <property type="entry name" value="RECEPTOR_TYR_KIN_III"/>
    <property type="match status" value="1"/>
</dbReference>
<comment type="function">
    <text evidence="9">Tyrosine-protein kinase that acts as a cell-surface receptor for vegf or vegfc. Combinations of multiple VEGF receptors are required for development of different blood vessel types in the embryo. Involved in angiogenesis, specifically in VEGF-induced sprouting of new blood vessels, but not required for proper vasculogenesis or hematopoiesis.</text>
</comment>
<comment type="catalytic activity">
    <reaction evidence="7">
        <text>L-tyrosyl-[protein] + ATP = O-phospho-L-tyrosyl-[protein] + ADP + H(+)</text>
        <dbReference type="Rhea" id="RHEA:10596"/>
        <dbReference type="Rhea" id="RHEA-COMP:10136"/>
        <dbReference type="Rhea" id="RHEA-COMP:20101"/>
        <dbReference type="ChEBI" id="CHEBI:15378"/>
        <dbReference type="ChEBI" id="CHEBI:30616"/>
        <dbReference type="ChEBI" id="CHEBI:46858"/>
        <dbReference type="ChEBI" id="CHEBI:61978"/>
        <dbReference type="ChEBI" id="CHEBI:456216"/>
        <dbReference type="EC" id="2.7.10.1"/>
    </reaction>
</comment>
<comment type="activity regulation">
    <text evidence="2">Present in an inactive conformation in the absence of bound ligand. Binding of vegfc or vegfd leads to dimerization and activation by autophosphorylation on tyrosine residues (By similarity).</text>
</comment>
<comment type="subunit">
    <text evidence="2">Interacts with vegfc and vegfd. Monomer in the absence of bound vegfc or vegfd. Homodimer in the presence of bound vegfc or vegfd (By similarity).</text>
</comment>
<comment type="subcellular location">
    <subcellularLocation>
        <location evidence="3">Cell membrane</location>
        <topology evidence="3">Single-pass type I membrane protein</topology>
    </subcellularLocation>
    <subcellularLocation>
        <location evidence="3">Cytoplasm</location>
    </subcellularLocation>
    <subcellularLocation>
        <location evidence="2">Nucleus</location>
    </subcellularLocation>
    <text evidence="3">Ligand-mediated autophosphorylation leads to rapid internalization.</text>
</comment>
<comment type="developmental stage">
    <text evidence="10">Expressed in all angioblasts of the forming trunk vessels at 17 hpf, by 21 hpf expression is restricted to the veins.</text>
</comment>
<comment type="domain">
    <text evidence="2">The first and second Ig-like C2-type (immunoglobulin-like) domains are sufficient for VEGFC binding. The fourth and fifth Ig-like C2-type (immunoglobulin-like) domains are sufficient for homodimerization. The fifth and seventh Ig-like C2-type (immunoglobulin-like) domains are required for autophosphorylation and further activation.</text>
</comment>
<comment type="PTM">
    <text evidence="2">Autophosphorylated on tyrosine residues upon ligand binding. Autophosphorylation occurs in trans, i.e. one subunit of the dimeric receptor phosphorylates tyrosine residues on the other subunit (By similarity).</text>
</comment>
<comment type="similarity">
    <text evidence="6">Belongs to the protein kinase superfamily. Tyr protein kinase family. CSF-1/PDGF receptor subfamily.</text>
</comment>
<organism>
    <name type="scientific">Danio rerio</name>
    <name type="common">Zebrafish</name>
    <name type="synonym">Brachydanio rerio</name>
    <dbReference type="NCBI Taxonomy" id="7955"/>
    <lineage>
        <taxon>Eukaryota</taxon>
        <taxon>Metazoa</taxon>
        <taxon>Chordata</taxon>
        <taxon>Craniata</taxon>
        <taxon>Vertebrata</taxon>
        <taxon>Euteleostomi</taxon>
        <taxon>Actinopterygii</taxon>
        <taxon>Neopterygii</taxon>
        <taxon>Teleostei</taxon>
        <taxon>Ostariophysi</taxon>
        <taxon>Cypriniformes</taxon>
        <taxon>Danionidae</taxon>
        <taxon>Danioninae</taxon>
        <taxon>Danio</taxon>
    </lineage>
</organism>
<gene>
    <name type="primary">flt4</name>
    <name type="synonym">flt-4</name>
    <name type="synonym">vegfr3</name>
</gene>
<name>VGFR3_DANRE</name>
<protein>
    <recommendedName>
        <fullName>Vascular endothelial growth factor receptor 3</fullName>
        <shortName>VEGFR-3</shortName>
        <ecNumber>2.7.10.1</ecNumber>
    </recommendedName>
</protein>
<feature type="signal peptide" evidence="4">
    <location>
        <begin position="1"/>
        <end position="24"/>
    </location>
</feature>
<feature type="chain" id="PRO_0000249464" description="Vascular endothelial growth factor receptor 3">
    <location>
        <begin position="25"/>
        <end position="1357"/>
    </location>
</feature>
<feature type="topological domain" description="Extracellular" evidence="4">
    <location>
        <begin position="25"/>
        <end position="796"/>
    </location>
</feature>
<feature type="transmembrane region" description="Helical" evidence="4">
    <location>
        <begin position="797"/>
        <end position="817"/>
    </location>
</feature>
<feature type="topological domain" description="Cytoplasmic" evidence="4">
    <location>
        <begin position="818"/>
        <end position="1357"/>
    </location>
</feature>
<feature type="domain" description="Ig-like C2-type 1">
    <location>
        <begin position="25"/>
        <end position="121"/>
    </location>
</feature>
<feature type="domain" description="Ig-like C2-type 2">
    <location>
        <begin position="138"/>
        <end position="244"/>
    </location>
</feature>
<feature type="domain" description="Ig-like C2-type 3">
    <location>
        <begin position="255"/>
        <end position="343"/>
    </location>
</feature>
<feature type="domain" description="Ig-like C2-type 4">
    <location>
        <begin position="352"/>
        <end position="442"/>
    </location>
</feature>
<feature type="domain" description="Ig-like C2-type 5">
    <location>
        <begin position="453"/>
        <end position="583"/>
    </location>
</feature>
<feature type="domain" description="Ig-like C2-type 6">
    <location>
        <begin position="583"/>
        <end position="690"/>
    </location>
</feature>
<feature type="domain" description="Ig-like C2-type 7">
    <location>
        <begin position="699"/>
        <end position="785"/>
    </location>
</feature>
<feature type="domain" description="Protein kinase" evidence="6">
    <location>
        <begin position="866"/>
        <end position="1181"/>
    </location>
</feature>
<feature type="region of interest" description="Disordered" evidence="8">
    <location>
        <begin position="978"/>
        <end position="1007"/>
    </location>
</feature>
<feature type="region of interest" description="Disordered" evidence="8">
    <location>
        <begin position="1192"/>
        <end position="1212"/>
    </location>
</feature>
<feature type="compositionally biased region" description="Polar residues" evidence="8">
    <location>
        <begin position="989"/>
        <end position="1005"/>
    </location>
</feature>
<feature type="active site" description="Proton acceptor" evidence="6 7">
    <location>
        <position position="1045"/>
    </location>
</feature>
<feature type="binding site" evidence="6">
    <location>
        <begin position="872"/>
        <end position="880"/>
    </location>
    <ligand>
        <name>ATP</name>
        <dbReference type="ChEBI" id="CHEBI:30616"/>
    </ligand>
</feature>
<feature type="binding site" evidence="6">
    <location>
        <position position="900"/>
    </location>
    <ligand>
        <name>ATP</name>
        <dbReference type="ChEBI" id="CHEBI:30616"/>
    </ligand>
</feature>
<feature type="modified residue" description="Phosphotyrosine; by autocatalysis" evidence="1">
    <location>
        <position position="1071"/>
    </location>
</feature>
<feature type="modified residue" description="Phosphotyrosine; by autocatalysis" evidence="1">
    <location>
        <position position="1076"/>
    </location>
</feature>
<feature type="modified residue" description="Phosphotyrosine; by autocatalysis" evidence="1">
    <location>
        <position position="1226"/>
    </location>
</feature>
<feature type="modified residue" description="Phosphotyrosine; by autocatalysis" evidence="1">
    <location>
        <position position="1227"/>
    </location>
</feature>
<feature type="modified residue" description="Phosphotyrosine; by autocatalysis" evidence="1">
    <location>
        <position position="1334"/>
    </location>
</feature>
<feature type="modified residue" description="Phosphotyrosine; by autocatalysis" evidence="1">
    <location>
        <position position="1338"/>
    </location>
</feature>
<feature type="glycosylation site" description="N-linked (GlcNAc...) asparagine" evidence="4">
    <location>
        <position position="44"/>
    </location>
</feature>
<feature type="glycosylation site" description="N-linked (GlcNAc...) asparagine" evidence="4">
    <location>
        <position position="48"/>
    </location>
</feature>
<feature type="glycosylation site" description="N-linked (GlcNAc...) asparagine" evidence="4">
    <location>
        <position position="114"/>
    </location>
</feature>
<feature type="glycosylation site" description="N-linked (GlcNAc...) asparagine" evidence="4">
    <location>
        <position position="216"/>
    </location>
</feature>
<feature type="glycosylation site" description="N-linked (GlcNAc...) asparagine" evidence="4">
    <location>
        <position position="271"/>
    </location>
</feature>
<feature type="glycosylation site" description="N-linked (GlcNAc...) asparagine" evidence="4">
    <location>
        <position position="360"/>
    </location>
</feature>
<feature type="glycosylation site" description="N-linked (GlcNAc...) asparagine" evidence="4">
    <location>
        <position position="400"/>
    </location>
</feature>
<feature type="glycosylation site" description="N-linked (GlcNAc...) asparagine" evidence="4">
    <location>
        <position position="440"/>
    </location>
</feature>
<feature type="glycosylation site" description="N-linked (GlcNAc...) asparagine" evidence="4">
    <location>
        <position position="553"/>
    </location>
</feature>
<feature type="glycosylation site" description="N-linked (GlcNAc...) asparagine" evidence="4">
    <location>
        <position position="610"/>
    </location>
</feature>
<feature type="glycosylation site" description="N-linked (GlcNAc...) asparagine" evidence="4">
    <location>
        <position position="660"/>
    </location>
</feature>
<feature type="glycosylation site" description="N-linked (GlcNAc...) asparagine" evidence="4">
    <location>
        <position position="707"/>
    </location>
</feature>
<feature type="glycosylation site" description="N-linked (GlcNAc...) asparagine" evidence="4">
    <location>
        <position position="711"/>
    </location>
</feature>
<feature type="glycosylation site" description="N-linked (GlcNAc...) asparagine" evidence="4">
    <location>
        <position position="751"/>
    </location>
</feature>
<feature type="disulfide bond" evidence="5">
    <location>
        <begin position="51"/>
        <end position="121"/>
    </location>
</feature>
<feature type="disulfide bond" evidence="5">
    <location>
        <begin position="173"/>
        <end position="225"/>
    </location>
</feature>
<feature type="disulfide bond" evidence="5">
    <location>
        <begin position="272"/>
        <end position="331"/>
    </location>
</feature>
<feature type="disulfide bond" evidence="5">
    <location>
        <begin position="473"/>
        <end position="562"/>
    </location>
</feature>
<feature type="disulfide bond" evidence="2">
    <location>
        <begin position="493"/>
        <end position="514"/>
    </location>
</feature>
<feature type="disulfide bond" evidence="5">
    <location>
        <begin position="606"/>
        <end position="674"/>
    </location>
</feature>
<feature type="disulfide bond" evidence="5">
    <location>
        <begin position="720"/>
        <end position="772"/>
    </location>
</feature>
<feature type="sequence conflict" description="In Ref. 1; AAS92272." evidence="11" ref="1">
    <original>R</original>
    <variation>K</variation>
    <location>
        <position position="567"/>
    </location>
</feature>
<evidence type="ECO:0000250" key="1"/>
<evidence type="ECO:0000250" key="2">
    <source>
        <dbReference type="UniProtKB" id="P35916"/>
    </source>
</evidence>
<evidence type="ECO:0000250" key="3">
    <source>
        <dbReference type="UniProtKB" id="P35917"/>
    </source>
</evidence>
<evidence type="ECO:0000255" key="4"/>
<evidence type="ECO:0000255" key="5">
    <source>
        <dbReference type="PROSITE-ProRule" id="PRU00114"/>
    </source>
</evidence>
<evidence type="ECO:0000255" key="6">
    <source>
        <dbReference type="PROSITE-ProRule" id="PRU00159"/>
    </source>
</evidence>
<evidence type="ECO:0000255" key="7">
    <source>
        <dbReference type="PROSITE-ProRule" id="PRU10028"/>
    </source>
</evidence>
<evidence type="ECO:0000256" key="8">
    <source>
        <dbReference type="SAM" id="MobiDB-lite"/>
    </source>
</evidence>
<evidence type="ECO:0000269" key="9">
    <source>
    </source>
</evidence>
<evidence type="ECO:0000269" key="10">
    <source>
    </source>
</evidence>
<evidence type="ECO:0000305" key="11"/>
<reference key="1">
    <citation type="submission" date="2004-01" db="EMBL/GenBank/DDBJ databases">
        <title>Synergistic signaling of vegf receptors is required for vasculogenesis in zebrafish.</title>
        <authorList>
            <person name="Habeck H."/>
            <person name="Langhoff J."/>
            <person name="Vogel A.M."/>
            <person name="Trowe T."/>
            <person name="Koblizek T.I."/>
            <person name="Schulte-Merker S."/>
        </authorList>
    </citation>
    <scope>NUCLEOTIDE SEQUENCE [MRNA]</scope>
</reference>
<reference key="2">
    <citation type="journal article" date="2006" name="Proc. Natl. Acad. Sci. U.S.A.">
        <title>Distinct genetic interactions between multiple Vegf receptors are required for development of different blood vessel types in zebrafish.</title>
        <authorList>
            <person name="Covassin L.D."/>
            <person name="Villefranc J.A."/>
            <person name="Kacergis M.C."/>
            <person name="Weinstein B.M."/>
            <person name="Lawson N.D."/>
        </authorList>
    </citation>
    <scope>NUCLEOTIDE SEQUENCE [MRNA]</scope>
    <scope>FUNCTION</scope>
</reference>
<reference key="3">
    <citation type="journal article" date="2013" name="Development">
        <title>The zebrafish common cardinal veins develop by a novel mechanism: lumen ensheathment.</title>
        <authorList>
            <person name="Helker C.S."/>
            <person name="Schuermann A."/>
            <person name="Karpanen T."/>
            <person name="Zeuschner D."/>
            <person name="Belting H.G."/>
            <person name="Affolter M."/>
            <person name="Schulte-Merker S."/>
            <person name="Herzog W."/>
        </authorList>
    </citation>
    <scope>DEVELOPMENTAL STAGE</scope>
</reference>